<proteinExistence type="inferred from homology"/>
<name>DOPR3_CAEBR</name>
<feature type="chain" id="PRO_0000270581" description="Dopamine receptor 3">
    <location>
        <begin position="1"/>
        <end position="604"/>
    </location>
</feature>
<feature type="topological domain" description="Extracellular" evidence="2">
    <location>
        <begin position="1"/>
        <end position="23"/>
    </location>
</feature>
<feature type="transmembrane region" description="Helical; Name=1" evidence="2">
    <location>
        <begin position="24"/>
        <end position="44"/>
    </location>
</feature>
<feature type="topological domain" description="Cytoplasmic" evidence="2">
    <location>
        <begin position="45"/>
        <end position="58"/>
    </location>
</feature>
<feature type="transmembrane region" description="Helical; Name=2" evidence="2">
    <location>
        <begin position="59"/>
        <end position="79"/>
    </location>
</feature>
<feature type="topological domain" description="Extracellular" evidence="2">
    <location>
        <begin position="80"/>
        <end position="96"/>
    </location>
</feature>
<feature type="transmembrane region" description="Helical; Name=3" evidence="2">
    <location>
        <begin position="97"/>
        <end position="117"/>
    </location>
</feature>
<feature type="topological domain" description="Cytoplasmic" evidence="2">
    <location>
        <begin position="118"/>
        <end position="141"/>
    </location>
</feature>
<feature type="transmembrane region" description="Helical; Name=4" evidence="2">
    <location>
        <begin position="142"/>
        <end position="162"/>
    </location>
</feature>
<feature type="topological domain" description="Extracellular" evidence="2">
    <location>
        <begin position="163"/>
        <end position="179"/>
    </location>
</feature>
<feature type="transmembrane region" description="Helical; Name=5" evidence="2">
    <location>
        <begin position="180"/>
        <end position="200"/>
    </location>
</feature>
<feature type="topological domain" description="Cytoplasmic" evidence="2">
    <location>
        <begin position="201"/>
        <end position="520"/>
    </location>
</feature>
<feature type="transmembrane region" description="Helical; Name=6" evidence="2">
    <location>
        <begin position="521"/>
        <end position="541"/>
    </location>
</feature>
<feature type="topological domain" description="Extracellular" evidence="2">
    <location>
        <begin position="542"/>
        <end position="559"/>
    </location>
</feature>
<feature type="transmembrane region" description="Helical; Name=7" evidence="2">
    <location>
        <begin position="560"/>
        <end position="580"/>
    </location>
</feature>
<feature type="topological domain" description="Cytoplasmic" evidence="2">
    <location>
        <begin position="581"/>
        <end position="604"/>
    </location>
</feature>
<feature type="region of interest" description="Disordered" evidence="4">
    <location>
        <begin position="399"/>
        <end position="430"/>
    </location>
</feature>
<feature type="disulfide bond" evidence="3">
    <location>
        <begin position="95"/>
        <end position="170"/>
    </location>
</feature>
<organism>
    <name type="scientific">Caenorhabditis briggsae</name>
    <dbReference type="NCBI Taxonomy" id="6238"/>
    <lineage>
        <taxon>Eukaryota</taxon>
        <taxon>Metazoa</taxon>
        <taxon>Ecdysozoa</taxon>
        <taxon>Nematoda</taxon>
        <taxon>Chromadorea</taxon>
        <taxon>Rhabditida</taxon>
        <taxon>Rhabditina</taxon>
        <taxon>Rhabditomorpha</taxon>
        <taxon>Rhabditoidea</taxon>
        <taxon>Rhabditidae</taxon>
        <taxon>Peloderinae</taxon>
        <taxon>Caenorhabditis</taxon>
    </lineage>
</organism>
<dbReference type="EMBL" id="HE601482">
    <property type="protein sequence ID" value="CAP30140.2"/>
    <property type="molecule type" value="Genomic_DNA"/>
</dbReference>
<dbReference type="SMR" id="Q61H86"/>
<dbReference type="FunCoup" id="Q61H86">
    <property type="interactions" value="30"/>
</dbReference>
<dbReference type="STRING" id="6238.Q61H86"/>
<dbReference type="WormBase" id="CBG10841a">
    <property type="protein sequence ID" value="CBP43788"/>
    <property type="gene ID" value="WBGene00032108"/>
    <property type="gene designation" value="Cbr-dop-3"/>
</dbReference>
<dbReference type="eggNOG" id="KOG3656">
    <property type="taxonomic scope" value="Eukaryota"/>
</dbReference>
<dbReference type="HOGENOM" id="CLU_009579_11_1_1"/>
<dbReference type="InParanoid" id="Q61H86"/>
<dbReference type="OMA" id="CELANPW"/>
<dbReference type="Proteomes" id="UP000008549">
    <property type="component" value="Unassembled WGS sequence"/>
</dbReference>
<dbReference type="GO" id="GO:0005886">
    <property type="term" value="C:plasma membrane"/>
    <property type="evidence" value="ECO:0000318"/>
    <property type="project" value="GO_Central"/>
</dbReference>
<dbReference type="GO" id="GO:0045202">
    <property type="term" value="C:synapse"/>
    <property type="evidence" value="ECO:0007669"/>
    <property type="project" value="GOC"/>
</dbReference>
<dbReference type="GO" id="GO:0001591">
    <property type="term" value="F:dopamine neurotransmitter receptor activity, coupled via Gi/Go"/>
    <property type="evidence" value="ECO:0000318"/>
    <property type="project" value="GO_Central"/>
</dbReference>
<dbReference type="GO" id="GO:0004930">
    <property type="term" value="F:G protein-coupled receptor activity"/>
    <property type="evidence" value="ECO:0000318"/>
    <property type="project" value="GO_Central"/>
</dbReference>
<dbReference type="FunFam" id="1.20.1070.10:FF:000486">
    <property type="entry name" value="Dopamine receptor 3"/>
    <property type="match status" value="1"/>
</dbReference>
<dbReference type="FunFam" id="1.20.1070.10:FF:000489">
    <property type="entry name" value="Dopamine receptor 3"/>
    <property type="match status" value="1"/>
</dbReference>
<dbReference type="Gene3D" id="1.20.1070.10">
    <property type="entry name" value="Rhodopsin 7-helix transmembrane proteins"/>
    <property type="match status" value="2"/>
</dbReference>
<dbReference type="InterPro" id="IPR000276">
    <property type="entry name" value="GPCR_Rhodpsn"/>
</dbReference>
<dbReference type="InterPro" id="IPR017452">
    <property type="entry name" value="GPCR_Rhodpsn_7TM"/>
</dbReference>
<dbReference type="PANTHER" id="PTHR24248">
    <property type="entry name" value="ADRENERGIC RECEPTOR-RELATED G-PROTEIN COUPLED RECEPTOR"/>
    <property type="match status" value="1"/>
</dbReference>
<dbReference type="PANTHER" id="PTHR24248:SF125">
    <property type="entry name" value="DOPAMINE D2-LIKE RECEPTOR"/>
    <property type="match status" value="1"/>
</dbReference>
<dbReference type="Pfam" id="PF00001">
    <property type="entry name" value="7tm_1"/>
    <property type="match status" value="2"/>
</dbReference>
<dbReference type="PRINTS" id="PR00237">
    <property type="entry name" value="GPCRRHODOPSN"/>
</dbReference>
<dbReference type="SMART" id="SM01381">
    <property type="entry name" value="7TM_GPCR_Srsx"/>
    <property type="match status" value="1"/>
</dbReference>
<dbReference type="SUPFAM" id="SSF81321">
    <property type="entry name" value="Family A G protein-coupled receptor-like"/>
    <property type="match status" value="1"/>
</dbReference>
<dbReference type="PROSITE" id="PS00237">
    <property type="entry name" value="G_PROTEIN_RECEP_F1_1"/>
    <property type="match status" value="1"/>
</dbReference>
<dbReference type="PROSITE" id="PS50262">
    <property type="entry name" value="G_PROTEIN_RECEP_F1_2"/>
    <property type="match status" value="1"/>
</dbReference>
<gene>
    <name evidence="1" type="primary">dop-3</name>
    <name type="ORF">CBG10841</name>
</gene>
<sequence length="604" mass="68001">MLTGQHHIPGIESPLMVVLWRVAAGVFLPLVPTMAVFGNVLVILSVYRERNLQTVTNMLIVSLAVSDLFVAIGVMSFGVYYEWNGFKWGLGSFFCHVYQALDVACSTASILNLLAISLDRYIAIGHPISYAQYGARGGRAMISITIVWGVSCAVALPLLLGVNPMENDQCELANPWFNMISSIFSFFIPCIAMIILYTIIFRRLRQRERARSLRQAQRSETDKISSALLGGAQIARQMGKHFKNRTDQILLEISFQTSSFPTISESSDDGSTISPMINSFNNFLPKKSQYPSTLIPAIPECGSMPNLTIIERPAPPEKEKDIELSIMDLHDTVEMLDDKYTSAMITRSFGEELEEILPFIDGSTSVKNSREQLHATRSNTSTTRLLDVKPELRSISVPSIQDEKKMNSRPPENPFAHQNGTNKQRLLPNPGILMKSKSTTLLKTNGYLDTDSLNNNRNSHKKSTADLLPNDDYSFTDSMRVYKNRLFKSLSRATSGWNKPRPSRHMVKKATKQMRREHKATVTLAVVLAVFLFCWLPFFILHLSNSICLVIDSNSDCIGFLPLYLATWLGYLNSSLNPLIYTVFDQRFRNAFRNILSCGFFKKR</sequence>
<protein>
    <recommendedName>
        <fullName>Dopamine receptor 3</fullName>
    </recommendedName>
</protein>
<comment type="function">
    <text evidence="1">Receptor for dopamine. The activity of this receptor is mediated by G proteins which activate adenylyl cyclase. In terms of antagonist responses, would be classed with the D2-like dopamine receptor group. Mediates the effect of dopamine on the inhibition of locomotion. Acts as an antagonist of dop-1 (By similarity).</text>
</comment>
<comment type="subcellular location">
    <subcellularLocation>
        <location evidence="5">Cell membrane</location>
        <topology evidence="2">Multi-pass membrane protein</topology>
    </subcellularLocation>
</comment>
<comment type="similarity">
    <text evidence="3">Belongs to the G-protein coupled receptor 1 family.</text>
</comment>
<evidence type="ECO:0000250" key="1">
    <source>
        <dbReference type="UniProtKB" id="Q6RYS9"/>
    </source>
</evidence>
<evidence type="ECO:0000255" key="2"/>
<evidence type="ECO:0000255" key="3">
    <source>
        <dbReference type="PROSITE-ProRule" id="PRU00521"/>
    </source>
</evidence>
<evidence type="ECO:0000256" key="4">
    <source>
        <dbReference type="SAM" id="MobiDB-lite"/>
    </source>
</evidence>
<evidence type="ECO:0000305" key="5"/>
<accession>Q61H86</accession>
<accession>A8XC42</accession>
<reference key="1">
    <citation type="journal article" date="2003" name="PLoS Biol.">
        <title>The genome sequence of Caenorhabditis briggsae: a platform for comparative genomics.</title>
        <authorList>
            <person name="Stein L.D."/>
            <person name="Bao Z."/>
            <person name="Blasiar D."/>
            <person name="Blumenthal T."/>
            <person name="Brent M.R."/>
            <person name="Chen N."/>
            <person name="Chinwalla A."/>
            <person name="Clarke L."/>
            <person name="Clee C."/>
            <person name="Coghlan A."/>
            <person name="Coulson A."/>
            <person name="D'Eustachio P."/>
            <person name="Fitch D.H.A."/>
            <person name="Fulton L.A."/>
            <person name="Fulton R.E."/>
            <person name="Griffiths-Jones S."/>
            <person name="Harris T.W."/>
            <person name="Hillier L.W."/>
            <person name="Kamath R."/>
            <person name="Kuwabara P.E."/>
            <person name="Mardis E.R."/>
            <person name="Marra M.A."/>
            <person name="Miner T.L."/>
            <person name="Minx P."/>
            <person name="Mullikin J.C."/>
            <person name="Plumb R.W."/>
            <person name="Rogers J."/>
            <person name="Schein J.E."/>
            <person name="Sohrmann M."/>
            <person name="Spieth J."/>
            <person name="Stajich J.E."/>
            <person name="Wei C."/>
            <person name="Willey D."/>
            <person name="Wilson R.K."/>
            <person name="Durbin R.M."/>
            <person name="Waterston R.H."/>
        </authorList>
    </citation>
    <scope>NUCLEOTIDE SEQUENCE [LARGE SCALE GENOMIC DNA]</scope>
    <source>
        <strain>AF16</strain>
    </source>
</reference>
<keyword id="KW-1003">Cell membrane</keyword>
<keyword id="KW-1015">Disulfide bond</keyword>
<keyword id="KW-0297">G-protein coupled receptor</keyword>
<keyword id="KW-0472">Membrane</keyword>
<keyword id="KW-0675">Receptor</keyword>
<keyword id="KW-1185">Reference proteome</keyword>
<keyword id="KW-0807">Transducer</keyword>
<keyword id="KW-0812">Transmembrane</keyword>
<keyword id="KW-1133">Transmembrane helix</keyword>